<keyword id="KW-0067">ATP-binding</keyword>
<keyword id="KW-1003">Cell membrane</keyword>
<keyword id="KW-0472">Membrane</keyword>
<keyword id="KW-0547">Nucleotide-binding</keyword>
<keyword id="KW-1185">Reference proteome</keyword>
<keyword id="KW-0677">Repeat</keyword>
<keyword id="KW-1278">Translocase</keyword>
<keyword id="KW-0813">Transport</keyword>
<sequence length="568" mass="63257">MKKPIITFNNFSFQYHSQSEPTLKGIQLTIYEGEKVLIVGPSGSGKSTLAQCINGLIPNIYEGEIQGTATVAGKNIQETSLFDLSFDVGTVLQDTDGQFIGLTVAEDIAFALENDAVEQAEMKKAVQKWSEIVELNQLLQHRPQDLSGGQKQRVSMAGVLINQSKILLFDEPLANLDPRAGQETMTLIDTIQQETKATVLIIEHRLEDVLCESVDRIIVMNEGTIISDTTPDELLRQDTLTQQGIREPLYVTAMKYAGIDLTQVSHLDKLAEVSGETVLPKMTQWSVQPSSVSAVKGAELLRLEQVSYQYDRHGEKVLDDFSVTIHHGEMISIVGKNGAGKSTLSKIICGFITPQSGKILWEGQDFSNYSIKERADKIGYVMQNPNQMISKKMIFEEVALGLVLRDVPQAEIEERVTNILHICGLYPFRNWPISALSFGQKKRVTIASILVLEPELLILDEPTAGQDFKHYTEMMTFLEELNRLGVTILMITHDMHLMLEYTTRALVVCDGRLLADATPVAVLTDEKLIQAASLKETSLFTFAKALGLENPLLFTEKFVAYDREVRFG</sequence>
<feature type="chain" id="PRO_0000092009" description="Putative ABC transporter ATP-binding protein EF_2153">
    <location>
        <begin position="1"/>
        <end position="568"/>
    </location>
</feature>
<feature type="domain" description="ABC transporter 1" evidence="2">
    <location>
        <begin position="6"/>
        <end position="247"/>
    </location>
</feature>
<feature type="domain" description="ABC transporter 2" evidence="2">
    <location>
        <begin position="301"/>
        <end position="535"/>
    </location>
</feature>
<feature type="binding site" evidence="2">
    <location>
        <begin position="40"/>
        <end position="47"/>
    </location>
    <ligand>
        <name>ATP</name>
        <dbReference type="ChEBI" id="CHEBI:30616"/>
        <label>1</label>
    </ligand>
</feature>
<feature type="binding site" evidence="2">
    <location>
        <begin position="335"/>
        <end position="342"/>
    </location>
    <ligand>
        <name>ATP</name>
        <dbReference type="ChEBI" id="CHEBI:30616"/>
        <label>2</label>
    </ligand>
</feature>
<accession>Q832R5</accession>
<protein>
    <recommendedName>
        <fullName>Putative ABC transporter ATP-binding protein EF_2153</fullName>
        <ecNumber>7.-.-.-</ecNumber>
    </recommendedName>
</protein>
<proteinExistence type="inferred from homology"/>
<comment type="function">
    <text evidence="1">Probably part of an ABC transporter complex. Responsible for energy coupling to the transport system (By similarity).</text>
</comment>
<comment type="subcellular location">
    <subcellularLocation>
        <location evidence="1">Cell membrane</location>
        <topology evidence="1">Peripheral membrane protein</topology>
    </subcellularLocation>
</comment>
<comment type="similarity">
    <text evidence="3">Belongs to the ABC transporter superfamily.</text>
</comment>
<evidence type="ECO:0000250" key="1"/>
<evidence type="ECO:0000255" key="2">
    <source>
        <dbReference type="PROSITE-ProRule" id="PRU00434"/>
    </source>
</evidence>
<evidence type="ECO:0000305" key="3"/>
<dbReference type="EC" id="7.-.-.-"/>
<dbReference type="EMBL" id="AE016830">
    <property type="protein sequence ID" value="AAO81886.1"/>
    <property type="molecule type" value="Genomic_DNA"/>
</dbReference>
<dbReference type="RefSeq" id="NP_815816.1">
    <property type="nucleotide sequence ID" value="NC_004668.1"/>
</dbReference>
<dbReference type="RefSeq" id="WP_002380507.1">
    <property type="nucleotide sequence ID" value="NZ_KE136528.1"/>
</dbReference>
<dbReference type="SMR" id="Q832R5"/>
<dbReference type="STRING" id="226185.EF_2153"/>
<dbReference type="EnsemblBacteria" id="AAO81886">
    <property type="protein sequence ID" value="AAO81886"/>
    <property type="gene ID" value="EF_2153"/>
</dbReference>
<dbReference type="KEGG" id="efa:EF2153"/>
<dbReference type="PATRIC" id="fig|226185.45.peg.1375"/>
<dbReference type="eggNOG" id="COG1122">
    <property type="taxonomic scope" value="Bacteria"/>
</dbReference>
<dbReference type="HOGENOM" id="CLU_000604_86_7_9"/>
<dbReference type="Proteomes" id="UP000001415">
    <property type="component" value="Chromosome"/>
</dbReference>
<dbReference type="GO" id="GO:0043190">
    <property type="term" value="C:ATP-binding cassette (ABC) transporter complex"/>
    <property type="evidence" value="ECO:0007669"/>
    <property type="project" value="TreeGrafter"/>
</dbReference>
<dbReference type="GO" id="GO:0005524">
    <property type="term" value="F:ATP binding"/>
    <property type="evidence" value="ECO:0007669"/>
    <property type="project" value="UniProtKB-KW"/>
</dbReference>
<dbReference type="GO" id="GO:0016887">
    <property type="term" value="F:ATP hydrolysis activity"/>
    <property type="evidence" value="ECO:0007669"/>
    <property type="project" value="InterPro"/>
</dbReference>
<dbReference type="GO" id="GO:0042626">
    <property type="term" value="F:ATPase-coupled transmembrane transporter activity"/>
    <property type="evidence" value="ECO:0007669"/>
    <property type="project" value="TreeGrafter"/>
</dbReference>
<dbReference type="CDD" id="cd03225">
    <property type="entry name" value="ABC_cobalt_CbiO_domain1"/>
    <property type="match status" value="2"/>
</dbReference>
<dbReference type="FunFam" id="3.40.50.300:FF:001422">
    <property type="entry name" value="Cobalt ABC transporter ATP-binding protein"/>
    <property type="match status" value="1"/>
</dbReference>
<dbReference type="FunFam" id="3.40.50.300:FF:000224">
    <property type="entry name" value="Energy-coupling factor transporter ATP-binding protein EcfA"/>
    <property type="match status" value="1"/>
</dbReference>
<dbReference type="Gene3D" id="3.40.50.300">
    <property type="entry name" value="P-loop containing nucleotide triphosphate hydrolases"/>
    <property type="match status" value="2"/>
</dbReference>
<dbReference type="InterPro" id="IPR003593">
    <property type="entry name" value="AAA+_ATPase"/>
</dbReference>
<dbReference type="InterPro" id="IPR022216">
    <property type="entry name" value="ABC_Co_transporter"/>
</dbReference>
<dbReference type="InterPro" id="IPR003439">
    <property type="entry name" value="ABC_transporter-like_ATP-bd"/>
</dbReference>
<dbReference type="InterPro" id="IPR017871">
    <property type="entry name" value="ABC_transporter-like_CS"/>
</dbReference>
<dbReference type="InterPro" id="IPR015856">
    <property type="entry name" value="ABC_transpr_CbiO/EcfA_su"/>
</dbReference>
<dbReference type="InterPro" id="IPR050095">
    <property type="entry name" value="ECF_ABC_transporter_ATP-bd"/>
</dbReference>
<dbReference type="InterPro" id="IPR027417">
    <property type="entry name" value="P-loop_NTPase"/>
</dbReference>
<dbReference type="NCBIfam" id="NF010167">
    <property type="entry name" value="PRK13648.1"/>
    <property type="match status" value="2"/>
</dbReference>
<dbReference type="PANTHER" id="PTHR43553:SF26">
    <property type="entry name" value="ABC TRANSPORTER ATP-BINDING PROTEIN BC_2655-RELATED"/>
    <property type="match status" value="1"/>
</dbReference>
<dbReference type="PANTHER" id="PTHR43553">
    <property type="entry name" value="HEAVY METAL TRANSPORTER"/>
    <property type="match status" value="1"/>
</dbReference>
<dbReference type="Pfam" id="PF00005">
    <property type="entry name" value="ABC_tran"/>
    <property type="match status" value="2"/>
</dbReference>
<dbReference type="Pfam" id="PF12558">
    <property type="entry name" value="DUF3744"/>
    <property type="match status" value="1"/>
</dbReference>
<dbReference type="SMART" id="SM00382">
    <property type="entry name" value="AAA"/>
    <property type="match status" value="2"/>
</dbReference>
<dbReference type="SUPFAM" id="SSF52540">
    <property type="entry name" value="P-loop containing nucleoside triphosphate hydrolases"/>
    <property type="match status" value="2"/>
</dbReference>
<dbReference type="PROSITE" id="PS00211">
    <property type="entry name" value="ABC_TRANSPORTER_1"/>
    <property type="match status" value="2"/>
</dbReference>
<dbReference type="PROSITE" id="PS50893">
    <property type="entry name" value="ABC_TRANSPORTER_2"/>
    <property type="match status" value="2"/>
</dbReference>
<name>Y2153_ENTFA</name>
<organism>
    <name type="scientific">Enterococcus faecalis (strain ATCC 700802 / V583)</name>
    <dbReference type="NCBI Taxonomy" id="226185"/>
    <lineage>
        <taxon>Bacteria</taxon>
        <taxon>Bacillati</taxon>
        <taxon>Bacillota</taxon>
        <taxon>Bacilli</taxon>
        <taxon>Lactobacillales</taxon>
        <taxon>Enterococcaceae</taxon>
        <taxon>Enterococcus</taxon>
    </lineage>
</organism>
<reference key="1">
    <citation type="journal article" date="2003" name="Science">
        <title>Role of mobile DNA in the evolution of vancomycin-resistant Enterococcus faecalis.</title>
        <authorList>
            <person name="Paulsen I.T."/>
            <person name="Banerjei L."/>
            <person name="Myers G.S.A."/>
            <person name="Nelson K.E."/>
            <person name="Seshadri R."/>
            <person name="Read T.D."/>
            <person name="Fouts D.E."/>
            <person name="Eisen J.A."/>
            <person name="Gill S.R."/>
            <person name="Heidelberg J.F."/>
            <person name="Tettelin H."/>
            <person name="Dodson R.J."/>
            <person name="Umayam L.A."/>
            <person name="Brinkac L.M."/>
            <person name="Beanan M.J."/>
            <person name="Daugherty S.C."/>
            <person name="DeBoy R.T."/>
            <person name="Durkin S.A."/>
            <person name="Kolonay J.F."/>
            <person name="Madupu R."/>
            <person name="Nelson W.C."/>
            <person name="Vamathevan J.J."/>
            <person name="Tran B."/>
            <person name="Upton J."/>
            <person name="Hansen T."/>
            <person name="Shetty J."/>
            <person name="Khouri H.M."/>
            <person name="Utterback T.R."/>
            <person name="Radune D."/>
            <person name="Ketchum K.A."/>
            <person name="Dougherty B.A."/>
            <person name="Fraser C.M."/>
        </authorList>
    </citation>
    <scope>NUCLEOTIDE SEQUENCE [LARGE SCALE GENOMIC DNA]</scope>
    <source>
        <strain>ATCC 700802 / V583</strain>
    </source>
</reference>
<gene>
    <name type="ordered locus">EF_2153</name>
</gene>